<accession>Q5H9T9</accession>
<accession>Q5H9U7</accession>
<accession>Q86YI2</accession>
<accession>Q9H0J3</accession>
<protein>
    <recommendedName>
        <fullName>Fibrous sheath CABYR-binding protein</fullName>
    </recommendedName>
</protein>
<reference key="1">
    <citation type="journal article" date="2001" name="Genome Res.">
        <title>Towards a catalog of human genes and proteins: sequencing and analysis of 500 novel complete protein coding human cDNAs.</title>
        <authorList>
            <person name="Wiemann S."/>
            <person name="Weil B."/>
            <person name="Wellenreuther R."/>
            <person name="Gassenhuber J."/>
            <person name="Glassl S."/>
            <person name="Ansorge W."/>
            <person name="Boecher M."/>
            <person name="Bloecker H."/>
            <person name="Bauersachs S."/>
            <person name="Blum H."/>
            <person name="Lauber J."/>
            <person name="Duesterhoeft A."/>
            <person name="Beyer A."/>
            <person name="Koehrer K."/>
            <person name="Strack N."/>
            <person name="Mewes H.-W."/>
            <person name="Ottenwaelder B."/>
            <person name="Obermaier B."/>
            <person name="Tampe J."/>
            <person name="Heubner D."/>
            <person name="Wambutt R."/>
            <person name="Korn B."/>
            <person name="Klein M."/>
            <person name="Poustka A."/>
        </authorList>
    </citation>
    <scope>NUCLEOTIDE SEQUENCE [LARGE SCALE MRNA]</scope>
    <scope>VARIANT GLU-423</scope>
    <source>
        <tissue>Testis</tissue>
    </source>
</reference>
<reference key="2">
    <citation type="journal article" date="2003" name="Nature">
        <title>The DNA sequence and analysis of human chromosome 14.</title>
        <authorList>
            <person name="Heilig R."/>
            <person name="Eckenberg R."/>
            <person name="Petit J.-L."/>
            <person name="Fonknechten N."/>
            <person name="Da Silva C."/>
            <person name="Cattolico L."/>
            <person name="Levy M."/>
            <person name="Barbe V."/>
            <person name="De Berardinis V."/>
            <person name="Ureta-Vidal A."/>
            <person name="Pelletier E."/>
            <person name="Vico V."/>
            <person name="Anthouard V."/>
            <person name="Rowen L."/>
            <person name="Madan A."/>
            <person name="Qin S."/>
            <person name="Sun H."/>
            <person name="Du H."/>
            <person name="Pepin K."/>
            <person name="Artiguenave F."/>
            <person name="Robert C."/>
            <person name="Cruaud C."/>
            <person name="Bruels T."/>
            <person name="Jaillon O."/>
            <person name="Friedlander L."/>
            <person name="Samson G."/>
            <person name="Brottier P."/>
            <person name="Cure S."/>
            <person name="Segurens B."/>
            <person name="Aniere F."/>
            <person name="Samain S."/>
            <person name="Crespeau H."/>
            <person name="Abbasi N."/>
            <person name="Aiach N."/>
            <person name="Boscus D."/>
            <person name="Dickhoff R."/>
            <person name="Dors M."/>
            <person name="Dubois I."/>
            <person name="Friedman C."/>
            <person name="Gouyvenoux M."/>
            <person name="James R."/>
            <person name="Madan A."/>
            <person name="Mairey-Estrada B."/>
            <person name="Mangenot S."/>
            <person name="Martins N."/>
            <person name="Menard M."/>
            <person name="Oztas S."/>
            <person name="Ratcliffe A."/>
            <person name="Shaffer T."/>
            <person name="Trask B."/>
            <person name="Vacherie B."/>
            <person name="Bellemere C."/>
            <person name="Belser C."/>
            <person name="Besnard-Gonnet M."/>
            <person name="Bartol-Mavel D."/>
            <person name="Boutard M."/>
            <person name="Briez-Silla S."/>
            <person name="Combette S."/>
            <person name="Dufosse-Laurent V."/>
            <person name="Ferron C."/>
            <person name="Lechaplais C."/>
            <person name="Louesse C."/>
            <person name="Muselet D."/>
            <person name="Magdelenat G."/>
            <person name="Pateau E."/>
            <person name="Petit E."/>
            <person name="Sirvain-Trukniewicz P."/>
            <person name="Trybou A."/>
            <person name="Vega-Czarny N."/>
            <person name="Bataille E."/>
            <person name="Bluet E."/>
            <person name="Bordelais I."/>
            <person name="Dubois M."/>
            <person name="Dumont C."/>
            <person name="Guerin T."/>
            <person name="Haffray S."/>
            <person name="Hammadi R."/>
            <person name="Muanga J."/>
            <person name="Pellouin V."/>
            <person name="Robert D."/>
            <person name="Wunderle E."/>
            <person name="Gauguet G."/>
            <person name="Roy A."/>
            <person name="Sainte-Marthe L."/>
            <person name="Verdier J."/>
            <person name="Verdier-Discala C."/>
            <person name="Hillier L.W."/>
            <person name="Fulton L."/>
            <person name="McPherson J."/>
            <person name="Matsuda F."/>
            <person name="Wilson R."/>
            <person name="Scarpelli C."/>
            <person name="Gyapay G."/>
            <person name="Wincker P."/>
            <person name="Saurin W."/>
            <person name="Quetier F."/>
            <person name="Waterston R."/>
            <person name="Hood L."/>
            <person name="Weissenbach J."/>
        </authorList>
    </citation>
    <scope>NUCLEOTIDE SEQUENCE [LARGE SCALE GENOMIC DNA]</scope>
</reference>
<reference key="3">
    <citation type="journal article" date="2004" name="Genome Res.">
        <title>The status, quality, and expansion of the NIH full-length cDNA project: the Mammalian Gene Collection (MGC).</title>
        <authorList>
            <consortium name="The MGC Project Team"/>
        </authorList>
    </citation>
    <scope>NUCLEOTIDE SEQUENCE [LARGE SCALE MRNA]</scope>
    <scope>VARIANTS GLN-195; PRO-380; SER-409 AND THR-642</scope>
    <source>
        <tissue>Brain</tissue>
    </source>
</reference>
<reference key="4">
    <citation type="journal article" date="2006" name="Science">
        <title>The consensus coding sequences of human breast and colorectal cancers.</title>
        <authorList>
            <person name="Sjoeblom T."/>
            <person name="Jones S."/>
            <person name="Wood L.D."/>
            <person name="Parsons D.W."/>
            <person name="Lin J."/>
            <person name="Barber T.D."/>
            <person name="Mandelker D."/>
            <person name="Leary R.J."/>
            <person name="Ptak J."/>
            <person name="Silliman N."/>
            <person name="Szabo S."/>
            <person name="Buckhaults P."/>
            <person name="Farrell C."/>
            <person name="Meeh P."/>
            <person name="Markowitz S.D."/>
            <person name="Willis J."/>
            <person name="Dawson D."/>
            <person name="Willson J.K.V."/>
            <person name="Gazdar A.F."/>
            <person name="Hartigan J."/>
            <person name="Wu L."/>
            <person name="Liu C."/>
            <person name="Parmigiani G."/>
            <person name="Park B.H."/>
            <person name="Bachman K.E."/>
            <person name="Papadopoulos N."/>
            <person name="Vogelstein B."/>
            <person name="Kinzler K.W."/>
            <person name="Velculescu V.E."/>
        </authorList>
    </citation>
    <scope>VARIANTS [LARGE SCALE ANALYSIS] ARG-262; LYS-764 AND LEU-775</scope>
</reference>
<dbReference type="EMBL" id="AL136775">
    <property type="protein sequence ID" value="CAB66709.1"/>
    <property type="status" value="ALT_INIT"/>
    <property type="molecule type" value="mRNA"/>
</dbReference>
<dbReference type="EMBL" id="CR933608">
    <property type="protein sequence ID" value="CAI45927.1"/>
    <property type="molecule type" value="mRNA"/>
</dbReference>
<dbReference type="EMBL" id="CR933626">
    <property type="protein sequence ID" value="CAI45935.1"/>
    <property type="molecule type" value="mRNA"/>
</dbReference>
<dbReference type="EMBL" id="AL356022">
    <property type="status" value="NOT_ANNOTATED_CDS"/>
    <property type="molecule type" value="Genomic_DNA"/>
</dbReference>
<dbReference type="EMBL" id="BC039878">
    <property type="protein sequence ID" value="AAH39878.1"/>
    <property type="molecule type" value="mRNA"/>
</dbReference>
<dbReference type="CCDS" id="CCDS9679.1"/>
<dbReference type="RefSeq" id="NP_115511.3">
    <property type="nucleotide sequence ID" value="NM_032135.3"/>
</dbReference>
<dbReference type="BioGRID" id="123870">
    <property type="interactions" value="1"/>
</dbReference>
<dbReference type="STRING" id="9606.ENSP00000344579"/>
<dbReference type="GlyGen" id="Q5H9T9">
    <property type="glycosylation" value="1 site, 1 O-linked glycan (1 site)"/>
</dbReference>
<dbReference type="iPTMnet" id="Q5H9T9"/>
<dbReference type="PhosphoSitePlus" id="Q5H9T9"/>
<dbReference type="BioMuta" id="FSCB"/>
<dbReference type="DMDM" id="308153599"/>
<dbReference type="MassIVE" id="Q5H9T9"/>
<dbReference type="PaxDb" id="9606-ENSP00000344579"/>
<dbReference type="PeptideAtlas" id="Q5H9T9"/>
<dbReference type="ProteomicsDB" id="62911"/>
<dbReference type="Antibodypedia" id="10167">
    <property type="antibodies" value="96 antibodies from 15 providers"/>
</dbReference>
<dbReference type="DNASU" id="84075"/>
<dbReference type="Ensembl" id="ENST00000340446.5">
    <property type="protein sequence ID" value="ENSP00000344579.4"/>
    <property type="gene ID" value="ENSG00000189139.6"/>
</dbReference>
<dbReference type="GeneID" id="84075"/>
<dbReference type="KEGG" id="hsa:84075"/>
<dbReference type="MANE-Select" id="ENST00000340446.5">
    <property type="protein sequence ID" value="ENSP00000344579.4"/>
    <property type="RefSeq nucleotide sequence ID" value="NM_032135.4"/>
    <property type="RefSeq protein sequence ID" value="NP_115511.3"/>
</dbReference>
<dbReference type="UCSC" id="uc001wvn.4">
    <property type="organism name" value="human"/>
</dbReference>
<dbReference type="AGR" id="HGNC:20494"/>
<dbReference type="CTD" id="84075"/>
<dbReference type="DisGeNET" id="84075"/>
<dbReference type="GeneCards" id="FSCB"/>
<dbReference type="HGNC" id="HGNC:20494">
    <property type="gene designation" value="FSCB"/>
</dbReference>
<dbReference type="HPA" id="ENSG00000189139">
    <property type="expression patterns" value="Tissue enriched (testis)"/>
</dbReference>
<dbReference type="MIM" id="611779">
    <property type="type" value="gene"/>
</dbReference>
<dbReference type="neXtProt" id="NX_Q5H9T9"/>
<dbReference type="OpenTargets" id="ENSG00000189139"/>
<dbReference type="PharmGKB" id="PA162389023"/>
<dbReference type="VEuPathDB" id="HostDB:ENSG00000189139"/>
<dbReference type="eggNOG" id="ENOG502S90R">
    <property type="taxonomic scope" value="Eukaryota"/>
</dbReference>
<dbReference type="GeneTree" id="ENSGT00730000111477"/>
<dbReference type="HOGENOM" id="CLU_407057_0_0_1"/>
<dbReference type="InParanoid" id="Q5H9T9"/>
<dbReference type="OMA" id="QLKMDRS"/>
<dbReference type="OrthoDB" id="9838448at2759"/>
<dbReference type="PAN-GO" id="Q5H9T9">
    <property type="GO annotations" value="4 GO annotations based on evolutionary models"/>
</dbReference>
<dbReference type="PhylomeDB" id="Q5H9T9"/>
<dbReference type="TreeFam" id="TF336897"/>
<dbReference type="PathwayCommons" id="Q5H9T9"/>
<dbReference type="BioGRID-ORCS" id="84075">
    <property type="hits" value="4 hits in 1143 CRISPR screens"/>
</dbReference>
<dbReference type="CD-CODE" id="91857CE7">
    <property type="entry name" value="Nucleolus"/>
</dbReference>
<dbReference type="GenomeRNAi" id="84075"/>
<dbReference type="Pharos" id="Q5H9T9">
    <property type="development level" value="Tbio"/>
</dbReference>
<dbReference type="PRO" id="PR:Q5H9T9"/>
<dbReference type="Proteomes" id="UP000005640">
    <property type="component" value="Chromosome 14"/>
</dbReference>
<dbReference type="RNAct" id="Q5H9T9">
    <property type="molecule type" value="protein"/>
</dbReference>
<dbReference type="Bgee" id="ENSG00000189139">
    <property type="expression patterns" value="Expressed in sperm and 26 other cell types or tissues"/>
</dbReference>
<dbReference type="GO" id="GO:0035686">
    <property type="term" value="C:sperm fibrous sheath"/>
    <property type="evidence" value="ECO:0000318"/>
    <property type="project" value="GO_Central"/>
</dbReference>
<dbReference type="GO" id="GO:0097228">
    <property type="term" value="C:sperm principal piece"/>
    <property type="evidence" value="ECO:0000318"/>
    <property type="project" value="GO_Central"/>
</dbReference>
<dbReference type="GO" id="GO:0005509">
    <property type="term" value="F:calcium ion binding"/>
    <property type="evidence" value="ECO:0000318"/>
    <property type="project" value="GO_Central"/>
</dbReference>
<dbReference type="GO" id="GO:0033234">
    <property type="term" value="P:negative regulation of protein sumoylation"/>
    <property type="evidence" value="ECO:0000250"/>
    <property type="project" value="UniProtKB"/>
</dbReference>
<dbReference type="InterPro" id="IPR043375">
    <property type="entry name" value="FSCB"/>
</dbReference>
<dbReference type="PANTHER" id="PTHR36135">
    <property type="entry name" value="FIBROUS SHEATH CABYR-BINDING PROTEIN"/>
    <property type="match status" value="1"/>
</dbReference>
<dbReference type="PANTHER" id="PTHR36135:SF1">
    <property type="entry name" value="FIBROUS SHEATH CABYR-BINDING PROTEIN"/>
    <property type="match status" value="1"/>
</dbReference>
<keyword id="KW-0106">Calcium</keyword>
<keyword id="KW-0966">Cell projection</keyword>
<keyword id="KW-0969">Cilium</keyword>
<keyword id="KW-0282">Flagellum</keyword>
<keyword id="KW-0597">Phosphoprotein</keyword>
<keyword id="KW-1267">Proteomics identification</keyword>
<keyword id="KW-1185">Reference proteome</keyword>
<feature type="chain" id="PRO_0000089952" description="Fibrous sheath CABYR-binding protein">
    <location>
        <begin position="1"/>
        <end position="825"/>
    </location>
</feature>
<feature type="region of interest" description="Disordered" evidence="2">
    <location>
        <begin position="1"/>
        <end position="43"/>
    </location>
</feature>
<feature type="region of interest" description="Disordered" evidence="2">
    <location>
        <begin position="113"/>
        <end position="139"/>
    </location>
</feature>
<feature type="region of interest" description="Disordered" evidence="2">
    <location>
        <begin position="168"/>
        <end position="232"/>
    </location>
</feature>
<feature type="region of interest" description="Disordered" evidence="2">
    <location>
        <begin position="244"/>
        <end position="718"/>
    </location>
</feature>
<feature type="region of interest" description="Disordered" evidence="2">
    <location>
        <begin position="732"/>
        <end position="751"/>
    </location>
</feature>
<feature type="compositionally biased region" description="Polar residues" evidence="2">
    <location>
        <begin position="21"/>
        <end position="40"/>
    </location>
</feature>
<feature type="compositionally biased region" description="Polar residues" evidence="2">
    <location>
        <begin position="200"/>
        <end position="220"/>
    </location>
</feature>
<feature type="compositionally biased region" description="Basic and acidic residues" evidence="2">
    <location>
        <begin position="277"/>
        <end position="290"/>
    </location>
</feature>
<feature type="compositionally biased region" description="Low complexity" evidence="2">
    <location>
        <begin position="348"/>
        <end position="357"/>
    </location>
</feature>
<feature type="compositionally biased region" description="Low complexity" evidence="2">
    <location>
        <begin position="398"/>
        <end position="407"/>
    </location>
</feature>
<feature type="compositionally biased region" description="Pro residues" evidence="2">
    <location>
        <begin position="610"/>
        <end position="676"/>
    </location>
</feature>
<feature type="modified residue" description="Phosphoserine" evidence="1">
    <location>
        <position position="160"/>
    </location>
</feature>
<feature type="sequence variant" id="VAR_056874" description="In dbSNP:rs36083807.">
    <original>P</original>
    <variation>S</variation>
    <location>
        <position position="119"/>
    </location>
</feature>
<feature type="sequence variant" id="VAR_056875" description="In dbSNP:rs3809429." evidence="4">
    <original>H</original>
    <variation>Q</variation>
    <location>
        <position position="195"/>
    </location>
</feature>
<feature type="sequence variant" id="VAR_035678" description="In a breast cancer sample; somatic mutation." evidence="5">
    <original>T</original>
    <variation>R</variation>
    <location>
        <position position="262"/>
    </location>
</feature>
<feature type="sequence variant" id="VAR_056876" description="In dbSNP:rs3825630." evidence="4">
    <original>L</original>
    <variation>P</variation>
    <location>
        <position position="380"/>
    </location>
</feature>
<feature type="sequence variant" id="VAR_056877" description="In dbSNP:rs1959379." evidence="4">
    <original>P</original>
    <variation>S</variation>
    <location>
        <position position="409"/>
    </location>
</feature>
<feature type="sequence variant" id="VAR_056878" description="In dbSNP:rs3825632." evidence="3">
    <original>D</original>
    <variation>E</variation>
    <location>
        <position position="423"/>
    </location>
</feature>
<feature type="sequence variant" id="VAR_056879" description="In dbSNP:rs8009274." evidence="4">
    <original>A</original>
    <variation>T</variation>
    <location>
        <position position="642"/>
    </location>
</feature>
<feature type="sequence variant" id="VAR_035679" description="In a breast cancer sample; somatic mutation." evidence="5">
    <original>Q</original>
    <variation>K</variation>
    <location>
        <position position="764"/>
    </location>
</feature>
<feature type="sequence variant" id="VAR_035680" description="In a breast cancer sample; somatic mutation; dbSNP:rs201017166." evidence="5">
    <original>S</original>
    <variation>L</variation>
    <location>
        <position position="775"/>
    </location>
</feature>
<feature type="sequence conflict" description="In Ref. 1; CAI45927." evidence="6" ref="1">
    <original>K</original>
    <variation>M</variation>
    <location>
        <position position="14"/>
    </location>
</feature>
<feature type="sequence conflict" description="In Ref. 1; CAI45927." evidence="6" ref="1">
    <original>N</original>
    <variation>S</variation>
    <location>
        <position position="33"/>
    </location>
</feature>
<feature type="sequence conflict" description="In Ref. 1; CAI45935." evidence="6" ref="1">
    <original>G</original>
    <variation>S</variation>
    <location>
        <position position="39"/>
    </location>
</feature>
<feature type="sequence conflict" description="In Ref. 1; CAI45927." evidence="6" ref="1">
    <original>Q</original>
    <variation>R</variation>
    <location>
        <position position="317"/>
    </location>
</feature>
<feature type="sequence conflict" description="In Ref. 3; AAH39878." evidence="6" ref="3">
    <original>P</original>
    <variation>L</variation>
    <location>
        <position position="359"/>
    </location>
</feature>
<feature type="sequence conflict" description="In Ref. 1; CAB66709/CAI45927/CAI45935." evidence="6" ref="1">
    <original>P</original>
    <variation>PPPAEEAPSEVQP</variation>
    <location>
        <position position="672"/>
    </location>
</feature>
<proteinExistence type="evidence at protein level"/>
<sequence>MVGKSQQTDVIEKKKHMAIPKSSSPKATHRIGNTSGSKGSYSAKAYESIRVSSELQQTWTKRKHGQEMTSKSLQTDTIVEEKKEVKLVEETVVPEEKSADVREAAIELPESVQDVEIPPNIPSVQLKMDRSQQTSRTGYWTMMNIPPVEKVDKEQQTYFSESEIVVISRPDSSSTKSKEDALKHKSSGKIFASEHPEFQPATNSNEEIGQKNISRTSFTQETKKGPPVLLEDELREEVTVPVVQEGSAVKKVASAEIEPPSTEKFPAKIQPPLVEEATAKAEPRPAEETHVQVQPSTEETPDAEAATAVAENSVKVQPPPAEEAPLVEFPAEIQPPSAEESPSVELLAEILPPSAEESPSEEPPAEILPPPAEKSPSVELLGEIRSPSAQKAPIEVQPLPAEGALEEAPAKVEPPTVEETLADVQPLLPEEAPREEARELQLSTAMETPAEEAPTEFQSPLPKETTAEEASAEIQLLAATEPPADETPAEARSPLSEETSAEEAHAEVQSPLAEETTAEEASAEIQLLAAIEAPADETPAEAQSPLSEETSAEEAPAEVQSPSAKGVSIEEAPLELQPPSGEETTAEEASAAIQLLAATEASAEEAPAEVQPPPAEEAPAEVQPPPAEEAPAEVQPPPAEEAPAEVQPPPAEEAPAEVQPPPAEEAPAEVQPPPAEEAPAEVQSLPAEETPIEETLAAVHSPPADDVPAEEASVDKHSPPADLLLTEEFPIGEASAEVSPPPSEQTPEDEALVENVSTEFQSPQVAGIPAVKLGSVVLEGEAKFEEVSKINSVLKDLSNTNDGQAPTLEIESVFHIELKQRPPEL</sequence>
<name>FSCB_HUMAN</name>
<comment type="function">
    <text evidence="1">May be involved in the later stages of fibrous sheath biogenesis and spermatozoa capacitation. Inhibits ROPN1 and ROPN1L SUMOylation. Binds calcium.</text>
</comment>
<comment type="subunit">
    <text evidence="1">Interacts with CABYR. Interacts with ROPN1 and ROPN1L; the interaction increases upon spermatozoa capacitation conditions.</text>
</comment>
<comment type="subcellular location">
    <subcellularLocation>
        <location evidence="1">Cell projection</location>
        <location evidence="1">Cilium</location>
        <location evidence="1">Flagellum</location>
    </subcellularLocation>
    <text evidence="1">Localizes to cortex of the fibrous sheath including the surface of the longitudinal columns and ribs of the principal piece of sperm flagella.</text>
</comment>
<comment type="PTM">
    <text evidence="1">Phosphorylated by PKA upon spermatozoa capacitation conditions.</text>
</comment>
<comment type="sequence caution" evidence="6">
    <conflict type="erroneous initiation">
        <sequence resource="EMBL-CDS" id="CAB66709"/>
    </conflict>
    <text>Truncated N-terminus.</text>
</comment>
<evidence type="ECO:0000250" key="1">
    <source>
        <dbReference type="UniProtKB" id="A1EGX6"/>
    </source>
</evidence>
<evidence type="ECO:0000256" key="2">
    <source>
        <dbReference type="SAM" id="MobiDB-lite"/>
    </source>
</evidence>
<evidence type="ECO:0000269" key="3">
    <source>
    </source>
</evidence>
<evidence type="ECO:0000269" key="4">
    <source>
    </source>
</evidence>
<evidence type="ECO:0000269" key="5">
    <source>
    </source>
</evidence>
<evidence type="ECO:0000305" key="6"/>
<organism>
    <name type="scientific">Homo sapiens</name>
    <name type="common">Human</name>
    <dbReference type="NCBI Taxonomy" id="9606"/>
    <lineage>
        <taxon>Eukaryota</taxon>
        <taxon>Metazoa</taxon>
        <taxon>Chordata</taxon>
        <taxon>Craniata</taxon>
        <taxon>Vertebrata</taxon>
        <taxon>Euteleostomi</taxon>
        <taxon>Mammalia</taxon>
        <taxon>Eutheria</taxon>
        <taxon>Euarchontoglires</taxon>
        <taxon>Primates</taxon>
        <taxon>Haplorrhini</taxon>
        <taxon>Catarrhini</taxon>
        <taxon>Hominidae</taxon>
        <taxon>Homo</taxon>
    </lineage>
</organism>
<gene>
    <name type="primary">FSCB</name>
    <name type="synonym">C14orf155</name>
</gene>